<comment type="similarity">
    <text evidence="1">Belongs to the eukaryotic ribosomal protein eL31 family.</text>
</comment>
<feature type="chain" id="PRO_1000205981" description="Large ribosomal subunit protein eL31">
    <location>
        <begin position="1"/>
        <end position="88"/>
    </location>
</feature>
<organism>
    <name type="scientific">Saccharolobus islandicus (strain Y.G.57.14 / Yellowstone #1)</name>
    <name type="common">Sulfolobus islandicus</name>
    <dbReference type="NCBI Taxonomy" id="439386"/>
    <lineage>
        <taxon>Archaea</taxon>
        <taxon>Thermoproteota</taxon>
        <taxon>Thermoprotei</taxon>
        <taxon>Sulfolobales</taxon>
        <taxon>Sulfolobaceae</taxon>
        <taxon>Saccharolobus</taxon>
    </lineage>
</organism>
<accession>C3N7D2</accession>
<proteinExistence type="inferred from homology"/>
<sequence>MKEKDNFEMVINLRKIKTGKRTGRSKRAVKFVRKIVARHFNADKVVIDPLLAKSISKNGNDKVVSKVRVVVSKVGEKIYLVRLAIKSR</sequence>
<protein>
    <recommendedName>
        <fullName evidence="1">Large ribosomal subunit protein eL31</fullName>
    </recommendedName>
    <alternativeName>
        <fullName evidence="2">50S ribosomal protein L31e</fullName>
    </alternativeName>
</protein>
<gene>
    <name evidence="1" type="primary">rpl31e</name>
    <name type="ordered locus">YG5714_1870</name>
</gene>
<name>RL31_SACI7</name>
<reference key="1">
    <citation type="journal article" date="2009" name="Proc. Natl. Acad. Sci. U.S.A.">
        <title>Biogeography of the Sulfolobus islandicus pan-genome.</title>
        <authorList>
            <person name="Reno M.L."/>
            <person name="Held N.L."/>
            <person name="Fields C.J."/>
            <person name="Burke P.V."/>
            <person name="Whitaker R.J."/>
        </authorList>
    </citation>
    <scope>NUCLEOTIDE SEQUENCE [LARGE SCALE GENOMIC DNA]</scope>
    <source>
        <strain>Y.G.57.14 / Yellowstone #1</strain>
    </source>
</reference>
<evidence type="ECO:0000255" key="1">
    <source>
        <dbReference type="HAMAP-Rule" id="MF_00410"/>
    </source>
</evidence>
<evidence type="ECO:0000305" key="2"/>
<dbReference type="EMBL" id="CP001403">
    <property type="protein sequence ID" value="ACP46126.1"/>
    <property type="molecule type" value="Genomic_DNA"/>
</dbReference>
<dbReference type="RefSeq" id="WP_012711730.1">
    <property type="nucleotide sequence ID" value="NC_012622.1"/>
</dbReference>
<dbReference type="SMR" id="C3N7D2"/>
<dbReference type="KEGG" id="siy:YG5714_1870"/>
<dbReference type="HOGENOM" id="CLU_2461923_0_0_2"/>
<dbReference type="Proteomes" id="UP000002308">
    <property type="component" value="Chromosome"/>
</dbReference>
<dbReference type="GO" id="GO:1990904">
    <property type="term" value="C:ribonucleoprotein complex"/>
    <property type="evidence" value="ECO:0007669"/>
    <property type="project" value="UniProtKB-KW"/>
</dbReference>
<dbReference type="GO" id="GO:0005840">
    <property type="term" value="C:ribosome"/>
    <property type="evidence" value="ECO:0007669"/>
    <property type="project" value="UniProtKB-KW"/>
</dbReference>
<dbReference type="GO" id="GO:0003735">
    <property type="term" value="F:structural constituent of ribosome"/>
    <property type="evidence" value="ECO:0007669"/>
    <property type="project" value="InterPro"/>
</dbReference>
<dbReference type="GO" id="GO:0006412">
    <property type="term" value="P:translation"/>
    <property type="evidence" value="ECO:0007669"/>
    <property type="project" value="UniProtKB-UniRule"/>
</dbReference>
<dbReference type="Gene3D" id="3.10.440.10">
    <property type="match status" value="1"/>
</dbReference>
<dbReference type="HAMAP" id="MF_00410">
    <property type="entry name" value="Ribosomal_eL31"/>
    <property type="match status" value="1"/>
</dbReference>
<dbReference type="InterPro" id="IPR000054">
    <property type="entry name" value="Ribosomal_eL31"/>
</dbReference>
<dbReference type="InterPro" id="IPR023621">
    <property type="entry name" value="Ribosomal_eL31_dom_sf"/>
</dbReference>
<dbReference type="NCBIfam" id="NF002258">
    <property type="entry name" value="PRK01192.1-1"/>
    <property type="match status" value="1"/>
</dbReference>
<dbReference type="Pfam" id="PF01198">
    <property type="entry name" value="Ribosomal_L31e"/>
    <property type="match status" value="1"/>
</dbReference>
<dbReference type="SMART" id="SM01380">
    <property type="entry name" value="Ribosomal_L31e"/>
    <property type="match status" value="1"/>
</dbReference>
<dbReference type="SUPFAM" id="SSF54575">
    <property type="entry name" value="Ribosomal protein L31e"/>
    <property type="match status" value="1"/>
</dbReference>
<keyword id="KW-0687">Ribonucleoprotein</keyword>
<keyword id="KW-0689">Ribosomal protein</keyword>